<protein>
    <recommendedName>
        <fullName evidence="1">Formate--tetrahydrofolate ligase</fullName>
        <ecNumber evidence="1">6.3.4.3</ecNumber>
    </recommendedName>
    <alternativeName>
        <fullName evidence="1">Formyltetrahydrofolate synthetase</fullName>
        <shortName evidence="1">FHS</shortName>
        <shortName evidence="1">FTHFS</shortName>
    </alternativeName>
</protein>
<organism>
    <name type="scientific">Dehalococcoides mccartyi (strain ATCC BAA-2266 / KCTC 15142 / 195)</name>
    <name type="common">Dehalococcoides ethenogenes (strain 195)</name>
    <dbReference type="NCBI Taxonomy" id="243164"/>
    <lineage>
        <taxon>Bacteria</taxon>
        <taxon>Bacillati</taxon>
        <taxon>Chloroflexota</taxon>
        <taxon>Dehalococcoidia</taxon>
        <taxon>Dehalococcoidales</taxon>
        <taxon>Dehalococcoidaceae</taxon>
        <taxon>Dehalococcoides</taxon>
    </lineage>
</organism>
<comment type="catalytic activity">
    <reaction evidence="1">
        <text>(6S)-5,6,7,8-tetrahydrofolate + formate + ATP = (6R)-10-formyltetrahydrofolate + ADP + phosphate</text>
        <dbReference type="Rhea" id="RHEA:20221"/>
        <dbReference type="ChEBI" id="CHEBI:15740"/>
        <dbReference type="ChEBI" id="CHEBI:30616"/>
        <dbReference type="ChEBI" id="CHEBI:43474"/>
        <dbReference type="ChEBI" id="CHEBI:57453"/>
        <dbReference type="ChEBI" id="CHEBI:195366"/>
        <dbReference type="ChEBI" id="CHEBI:456216"/>
        <dbReference type="EC" id="6.3.4.3"/>
    </reaction>
</comment>
<comment type="pathway">
    <text evidence="1">One-carbon metabolism; tetrahydrofolate interconversion.</text>
</comment>
<comment type="similarity">
    <text evidence="1">Belongs to the formate--tetrahydrofolate ligase family.</text>
</comment>
<name>FTHS_DEHM1</name>
<dbReference type="EC" id="6.3.4.3" evidence="1"/>
<dbReference type="EMBL" id="CP000027">
    <property type="protein sequence ID" value="AAW39992.1"/>
    <property type="molecule type" value="Genomic_DNA"/>
</dbReference>
<dbReference type="EMBL" id="CP000027">
    <property type="protein sequence ID" value="AAW40064.1"/>
    <property type="molecule type" value="Genomic_DNA"/>
</dbReference>
<dbReference type="RefSeq" id="WP_010936446.1">
    <property type="nucleotide sequence ID" value="NC_002936.3"/>
</dbReference>
<dbReference type="SMR" id="Q3Z8K3"/>
<dbReference type="STRING" id="243164.DET0671"/>
<dbReference type="GeneID" id="3230027"/>
<dbReference type="KEGG" id="det:DET0671"/>
<dbReference type="KEGG" id="det:DET0705"/>
<dbReference type="eggNOG" id="COG2759">
    <property type="taxonomic scope" value="Bacteria"/>
</dbReference>
<dbReference type="HOGENOM" id="CLU_003601_3_3_0"/>
<dbReference type="InParanoid" id="Q3Z8K3"/>
<dbReference type="UniPathway" id="UPA00193"/>
<dbReference type="Proteomes" id="UP000008289">
    <property type="component" value="Chromosome"/>
</dbReference>
<dbReference type="GO" id="GO:0005524">
    <property type="term" value="F:ATP binding"/>
    <property type="evidence" value="ECO:0007669"/>
    <property type="project" value="UniProtKB-UniRule"/>
</dbReference>
<dbReference type="GO" id="GO:0004329">
    <property type="term" value="F:formate-tetrahydrofolate ligase activity"/>
    <property type="evidence" value="ECO:0007669"/>
    <property type="project" value="UniProtKB-UniRule"/>
</dbReference>
<dbReference type="GO" id="GO:0035999">
    <property type="term" value="P:tetrahydrofolate interconversion"/>
    <property type="evidence" value="ECO:0007669"/>
    <property type="project" value="UniProtKB-UniRule"/>
</dbReference>
<dbReference type="CDD" id="cd00477">
    <property type="entry name" value="FTHFS"/>
    <property type="match status" value="1"/>
</dbReference>
<dbReference type="Gene3D" id="3.30.1510.10">
    <property type="entry name" value="Domain 2, N(10)-formyltetrahydrofolate synthetase"/>
    <property type="match status" value="1"/>
</dbReference>
<dbReference type="Gene3D" id="3.10.410.10">
    <property type="entry name" value="Formyltetrahydrofolate synthetase, domain 3"/>
    <property type="match status" value="1"/>
</dbReference>
<dbReference type="Gene3D" id="3.40.50.300">
    <property type="entry name" value="P-loop containing nucleotide triphosphate hydrolases"/>
    <property type="match status" value="1"/>
</dbReference>
<dbReference type="HAMAP" id="MF_01543">
    <property type="entry name" value="FTHFS"/>
    <property type="match status" value="1"/>
</dbReference>
<dbReference type="InterPro" id="IPR000559">
    <property type="entry name" value="Formate_THF_ligase"/>
</dbReference>
<dbReference type="InterPro" id="IPR020628">
    <property type="entry name" value="Formate_THF_ligase_CS"/>
</dbReference>
<dbReference type="InterPro" id="IPR027417">
    <property type="entry name" value="P-loop_NTPase"/>
</dbReference>
<dbReference type="NCBIfam" id="NF010032">
    <property type="entry name" value="PRK13507.1"/>
    <property type="match status" value="1"/>
</dbReference>
<dbReference type="Pfam" id="PF01268">
    <property type="entry name" value="FTHFS"/>
    <property type="match status" value="1"/>
</dbReference>
<dbReference type="SUPFAM" id="SSF52540">
    <property type="entry name" value="P-loop containing nucleoside triphosphate hydrolases"/>
    <property type="match status" value="1"/>
</dbReference>
<dbReference type="PROSITE" id="PS00721">
    <property type="entry name" value="FTHFS_1"/>
    <property type="match status" value="1"/>
</dbReference>
<dbReference type="PROSITE" id="PS00722">
    <property type="entry name" value="FTHFS_2"/>
    <property type="match status" value="1"/>
</dbReference>
<sequence>MTINNRKSHLKDLDPGLMKDWEIAEKAEEFLKPSKMLAEELGLTEDEIIPHGKYVAKVDFAGVLTRLKDRPNGKYIDVTAITPTPLGEGKSTTTMGLVQGLGNLGKKVTGAIRQPSSGPTFNIKGSAAGGGRSQCLPLSPFTLGLTGDIDAVTNSHNLAMVALQARIQHEANNTDEFLSSRSLKRLDIDPARVELKWAIDFCAQSLREIIMGIGGKTDGYQMHSGFGISVSSEVMAILSVFTGLADLRERMSKIIVAYRQNGEPVTTADLEVDGAMTALLLRAVNPNLLQTIEGQPVFVHAGPFANIAIGQSSIVADRLALKLADYHVTESGFGADIGFEKFWNIKCRLSGLKPDCAVIVATVRALKMHGGGPKVTPGAPLDPAYTTPNAALVEKGCQNMLAHIQTVKTAGINPVVCINHFAADTAQEIDIIRRTAEQAGARVAVSYHWANGGEGAAELAEAVIDACNEPNDFHFLYPEDMPLRERIYTIARKVYGADGVSYTQTALEKLARLENTGNTQFMPSCMVKTHLSLSHDPALKGRPGGFTLPIRDILTYMGAGLVVPVAGDIKLMPGTSSDPNFRRIDIDTHTGKVKGLF</sequence>
<keyword id="KW-0067">ATP-binding</keyword>
<keyword id="KW-0436">Ligase</keyword>
<keyword id="KW-0547">Nucleotide-binding</keyword>
<keyword id="KW-0554">One-carbon metabolism</keyword>
<feature type="chain" id="PRO_0000199344" description="Formate--tetrahydrofolate ligase">
    <location>
        <begin position="1"/>
        <end position="597"/>
    </location>
</feature>
<feature type="binding site" evidence="1">
    <location>
        <begin position="84"/>
        <end position="91"/>
    </location>
    <ligand>
        <name>ATP</name>
        <dbReference type="ChEBI" id="CHEBI:30616"/>
    </ligand>
</feature>
<gene>
    <name evidence="1" type="primary">fhs1</name>
    <name type="synonym">fhs-1</name>
    <name type="ordered locus">DET0671</name>
</gene>
<gene>
    <name evidence="1" type="primary">fhs2</name>
    <name type="synonym">fhs-2</name>
    <name type="ordered locus">DET0705</name>
</gene>
<reference key="1">
    <citation type="journal article" date="2005" name="Science">
        <title>Genome sequence of the PCE-dechlorinating bacterium Dehalococcoides ethenogenes.</title>
        <authorList>
            <person name="Seshadri R."/>
            <person name="Adrian L."/>
            <person name="Fouts D.E."/>
            <person name="Eisen J.A."/>
            <person name="Phillippy A.M."/>
            <person name="Methe B.A."/>
            <person name="Ward N.L."/>
            <person name="Nelson W.C."/>
            <person name="DeBoy R.T."/>
            <person name="Khouri H.M."/>
            <person name="Kolonay J.F."/>
            <person name="Dodson R.J."/>
            <person name="Daugherty S.C."/>
            <person name="Brinkac L.M."/>
            <person name="Sullivan S.A."/>
            <person name="Madupu R."/>
            <person name="Nelson K.E."/>
            <person name="Kang K.H."/>
            <person name="Impraim M."/>
            <person name="Tran K."/>
            <person name="Robinson J.M."/>
            <person name="Forberger H.A."/>
            <person name="Fraser C.M."/>
            <person name="Zinder S.H."/>
            <person name="Heidelberg J.F."/>
        </authorList>
    </citation>
    <scope>NUCLEOTIDE SEQUENCE [LARGE SCALE GENOMIC DNA]</scope>
    <source>
        <strain>ATCC BAA-2266 / KCTC 15142 / 195</strain>
    </source>
</reference>
<evidence type="ECO:0000255" key="1">
    <source>
        <dbReference type="HAMAP-Rule" id="MF_01543"/>
    </source>
</evidence>
<accession>Q3Z8K3</accession>
<proteinExistence type="inferred from homology"/>